<name>VPS16_DROME</name>
<feature type="chain" id="PRO_0000460250" description="Vacuolar protein sorting-associated protein 16 homolog">
    <location>
        <begin position="1"/>
        <end position="833"/>
    </location>
</feature>
<proteinExistence type="evidence at protein level"/>
<gene>
    <name evidence="10" type="primary">Vps16A</name>
    <name evidence="8" type="synonym">ma</name>
    <name evidence="10" type="ORF">CG8454</name>
</gene>
<dbReference type="EMBL" id="AE014297">
    <property type="protein sequence ID" value="AAF54353.1"/>
    <property type="molecule type" value="Genomic_DNA"/>
</dbReference>
<dbReference type="EMBL" id="AY071611">
    <property type="protein sequence ID" value="AAL49233.1"/>
    <property type="molecule type" value="mRNA"/>
</dbReference>
<dbReference type="RefSeq" id="NP_649877.1">
    <property type="nucleotide sequence ID" value="NM_141620.3"/>
</dbReference>
<dbReference type="SMR" id="Q9VHG1"/>
<dbReference type="ComplexPortal" id="CPX-8877">
    <property type="entry name" value="CORVET tethering complex"/>
</dbReference>
<dbReference type="ComplexPortal" id="CPX-936">
    <property type="entry name" value="HOPS tethering complex"/>
</dbReference>
<dbReference type="FunCoup" id="Q9VHG1">
    <property type="interactions" value="2801"/>
</dbReference>
<dbReference type="IntAct" id="Q9VHG1">
    <property type="interactions" value="4"/>
</dbReference>
<dbReference type="STRING" id="7227.FBpp0081459"/>
<dbReference type="PaxDb" id="7227-FBpp0081459"/>
<dbReference type="DNASU" id="41107"/>
<dbReference type="EnsemblMetazoa" id="FBtr0081979">
    <property type="protein sequence ID" value="FBpp0081459"/>
    <property type="gene ID" value="FBgn0285911"/>
</dbReference>
<dbReference type="GeneID" id="41107"/>
<dbReference type="KEGG" id="dme:Dmel_CG8454"/>
<dbReference type="UCSC" id="CG8454-RA">
    <property type="organism name" value="d. melanogaster"/>
</dbReference>
<dbReference type="AGR" id="FB:FBgn0285911"/>
<dbReference type="CTD" id="41107"/>
<dbReference type="FlyBase" id="FBgn0285911">
    <property type="gene designation" value="Vps16A"/>
</dbReference>
<dbReference type="VEuPathDB" id="VectorBase:FBgn0285911"/>
<dbReference type="eggNOG" id="KOG2280">
    <property type="taxonomic scope" value="Eukaryota"/>
</dbReference>
<dbReference type="GeneTree" id="ENSGT00390000003896"/>
<dbReference type="HOGENOM" id="CLU_008909_0_0_1"/>
<dbReference type="InParanoid" id="Q9VHG1"/>
<dbReference type="OMA" id="WCGDDCL"/>
<dbReference type="OrthoDB" id="1792at2759"/>
<dbReference type="BioGRID-ORCS" id="41107">
    <property type="hits" value="1 hit in 1 CRISPR screen"/>
</dbReference>
<dbReference type="ChiTaRS" id="E(spl)mbeta-HLH">
    <property type="organism name" value="fly"/>
</dbReference>
<dbReference type="GenomeRNAi" id="41107"/>
<dbReference type="Proteomes" id="UP000000803">
    <property type="component" value="Chromosome 3R"/>
</dbReference>
<dbReference type="Bgee" id="FBgn0285911">
    <property type="expression patterns" value="Expressed in embryonic/larval hemocyte (Drosophila) and 102 other cell types or tissues"/>
</dbReference>
<dbReference type="ExpressionAtlas" id="Q9VHG1">
    <property type="expression patterns" value="baseline and differential"/>
</dbReference>
<dbReference type="GO" id="GO:0005776">
    <property type="term" value="C:autophagosome"/>
    <property type="evidence" value="ECO:0000314"/>
    <property type="project" value="FlyBase"/>
</dbReference>
<dbReference type="GO" id="GO:0033263">
    <property type="term" value="C:CORVET complex"/>
    <property type="evidence" value="ECO:0000314"/>
    <property type="project" value="UniProtKB"/>
</dbReference>
<dbReference type="GO" id="GO:0005829">
    <property type="term" value="C:cytosol"/>
    <property type="evidence" value="ECO:0000314"/>
    <property type="project" value="FlyBase"/>
</dbReference>
<dbReference type="GO" id="GO:0005768">
    <property type="term" value="C:endosome"/>
    <property type="evidence" value="ECO:0000314"/>
    <property type="project" value="FlyBase"/>
</dbReference>
<dbReference type="GO" id="GO:0030897">
    <property type="term" value="C:HOPS complex"/>
    <property type="evidence" value="ECO:0000314"/>
    <property type="project" value="FlyBase"/>
</dbReference>
<dbReference type="GO" id="GO:0031902">
    <property type="term" value="C:late endosome membrane"/>
    <property type="evidence" value="ECO:0007669"/>
    <property type="project" value="UniProtKB-SubCell"/>
</dbReference>
<dbReference type="GO" id="GO:0005765">
    <property type="term" value="C:lysosomal membrane"/>
    <property type="evidence" value="ECO:0007669"/>
    <property type="project" value="UniProtKB-SubCell"/>
</dbReference>
<dbReference type="GO" id="GO:0005764">
    <property type="term" value="C:lysosome"/>
    <property type="evidence" value="ECO:0000314"/>
    <property type="project" value="FlyBase"/>
</dbReference>
<dbReference type="GO" id="GO:0003779">
    <property type="term" value="F:actin binding"/>
    <property type="evidence" value="ECO:0000318"/>
    <property type="project" value="GO_Central"/>
</dbReference>
<dbReference type="GO" id="GO:0097352">
    <property type="term" value="P:autophagosome maturation"/>
    <property type="evidence" value="ECO:0000315"/>
    <property type="project" value="FlyBase"/>
</dbReference>
<dbReference type="GO" id="GO:0009267">
    <property type="term" value="P:cellular response to starvation"/>
    <property type="evidence" value="ECO:0000315"/>
    <property type="project" value="FlyBase"/>
</dbReference>
<dbReference type="GO" id="GO:0160155">
    <property type="term" value="P:crinophagy"/>
    <property type="evidence" value="ECO:0000315"/>
    <property type="project" value="FlyBase"/>
</dbReference>
<dbReference type="GO" id="GO:0016197">
    <property type="term" value="P:endosomal transport"/>
    <property type="evidence" value="ECO:0000316"/>
    <property type="project" value="FlyBase"/>
</dbReference>
<dbReference type="GO" id="GO:0034058">
    <property type="term" value="P:endosomal vesicle fusion"/>
    <property type="evidence" value="ECO:0000315"/>
    <property type="project" value="UniProtKB"/>
</dbReference>
<dbReference type="GO" id="GO:0008333">
    <property type="term" value="P:endosome to lysosome transport"/>
    <property type="evidence" value="ECO:0000315"/>
    <property type="project" value="FlyBase"/>
</dbReference>
<dbReference type="GO" id="GO:0008057">
    <property type="term" value="P:eye pigment granule organization"/>
    <property type="evidence" value="ECO:0000315"/>
    <property type="project" value="FlyBase"/>
</dbReference>
<dbReference type="GO" id="GO:0006886">
    <property type="term" value="P:intracellular protein transport"/>
    <property type="evidence" value="ECO:0007669"/>
    <property type="project" value="InterPro"/>
</dbReference>
<dbReference type="GO" id="GO:0007041">
    <property type="term" value="P:lysosomal transport"/>
    <property type="evidence" value="ECO:0000315"/>
    <property type="project" value="FlyBase"/>
</dbReference>
<dbReference type="GO" id="GO:0035542">
    <property type="term" value="P:regulation of SNARE complex assembly"/>
    <property type="evidence" value="ECO:0000250"/>
    <property type="project" value="FlyBase"/>
</dbReference>
<dbReference type="GO" id="GO:0042144">
    <property type="term" value="P:vacuole fusion, non-autophagic"/>
    <property type="evidence" value="ECO:0000318"/>
    <property type="project" value="GO_Central"/>
</dbReference>
<dbReference type="Gene3D" id="1.10.150.780">
    <property type="entry name" value="Vps16, C-terminal region"/>
    <property type="match status" value="1"/>
</dbReference>
<dbReference type="InterPro" id="IPR016534">
    <property type="entry name" value="VPS16"/>
</dbReference>
<dbReference type="InterPro" id="IPR006925">
    <property type="entry name" value="Vps16_C"/>
</dbReference>
<dbReference type="InterPro" id="IPR038132">
    <property type="entry name" value="Vps16_C_sf"/>
</dbReference>
<dbReference type="InterPro" id="IPR006926">
    <property type="entry name" value="Vps16_N"/>
</dbReference>
<dbReference type="PANTHER" id="PTHR12811">
    <property type="entry name" value="VACUOLAR PROTEIN SORTING VPS16"/>
    <property type="match status" value="1"/>
</dbReference>
<dbReference type="PANTHER" id="PTHR12811:SF0">
    <property type="entry name" value="VACUOLAR PROTEIN SORTING-ASSOCIATED PROTEIN 16 HOMOLOG"/>
    <property type="match status" value="1"/>
</dbReference>
<dbReference type="Pfam" id="PF04840">
    <property type="entry name" value="Vps16_C"/>
    <property type="match status" value="1"/>
</dbReference>
<dbReference type="Pfam" id="PF04841">
    <property type="entry name" value="Vps16_N"/>
    <property type="match status" value="1"/>
</dbReference>
<dbReference type="PIRSF" id="PIRSF007949">
    <property type="entry name" value="VPS16"/>
    <property type="match status" value="1"/>
</dbReference>
<protein>
    <recommendedName>
        <fullName evidence="1">Vacuolar protein sorting-associated protein 16 homolog</fullName>
    </recommendedName>
    <alternativeName>
        <fullName evidence="7">Protein maroon</fullName>
    </alternativeName>
</protein>
<accession>Q9VHG1</accession>
<sequence>MPIMYNTGEWFKVRPDYYRKVELATPDWPLDLDLEYMWVEVAPYGGPLAVTRDPTKLVPVKGNARPMIRIFDTTGREMGHILWNHGKLIAMGWSDMEELICIQENATVFVYDMFGREKESYSIGDEASVTKIVEGKVFQSSAGTGVAVMTTSGRVFLKQNSSKTERKLPDIPNSSMNCSCWEIVTEGRNSYCLLGRDREVIKLFPGETVGTITANLFEKPHERIIKISVSYNHQHLALYTNTGLLWLGSVDMRQKYCEFDTGRKDMPLQMEWIMNSDNSEADAVVISYPSYLLIVNRNADRSDFPYDPVMFLVAEMDGVRIITQSSHEIIQRLPKCVENIFAVNSQEPASYLFEAQKKFEEKSYKSDEYLSMCREKIDLAVSECIEAASYEFCPETQKSLLRTAYFGKGFIRNHNPDEYMRIMRILRVLNTLRHERIAMPITFKQFSHLNTEVILSRLVFRKHYAIAIQVAKHLNLPESWILEHWAYHKVMNDPNDTEVARKITEKFKNPSVEGISFCNIASKAHQAGRDDLAIKLLELESRASLHVPLLLKMRKFDRAVGSATQSGDTELITQVLLEMKMHMMLSNLHMTIRDHPLALNIYKKIMRESNRAGLYGIYNTEDDQKAIAEYHFQNAIETEGLESNLSMIGNAYAQGRCTLEAELCADTSRLIKLQKTLSTKYNVSLNGLSIHETIQELLLIGELKEAERIRSEFKVPDRRFWWLRILTLSSQHKWEELEKLAKSKKSPIGYDPFVEVCLKQDNVMEARKYIPRCRDNRRVVWYMRANLFNEAIDSAFEQRDVHSLFELQKNQAIVNNGTLLSKVCDCIAMLEGK</sequence>
<evidence type="ECO:0000255" key="1">
    <source>
        <dbReference type="PIRNR" id="PIRNR007949"/>
    </source>
</evidence>
<evidence type="ECO:0000269" key="2">
    <source>
    </source>
</evidence>
<evidence type="ECO:0000269" key="3">
    <source>
    </source>
</evidence>
<evidence type="ECO:0000269" key="4">
    <source>
    </source>
</evidence>
<evidence type="ECO:0000269" key="5">
    <source>
    </source>
</evidence>
<evidence type="ECO:0000303" key="6">
    <source>
    </source>
</evidence>
<evidence type="ECO:0000305" key="7"/>
<evidence type="ECO:0000312" key="8">
    <source>
        <dbReference type="EMBL" id="AAF54353.1"/>
    </source>
</evidence>
<evidence type="ECO:0000312" key="9">
    <source>
        <dbReference type="EMBL" id="AAL49233.1"/>
    </source>
</evidence>
<evidence type="ECO:0000312" key="10">
    <source>
        <dbReference type="FlyBase" id="FBgn0285911"/>
    </source>
</evidence>
<evidence type="ECO:0000312" key="11">
    <source>
        <dbReference type="Proteomes" id="UP000000803"/>
    </source>
</evidence>
<comment type="function">
    <text evidence="2 3 5">Core component of the class C core vacuole/endosome tethering (CORVET) and the homotypic fusion and vacuole protein sorting (HOPS) tethering complexes involved in endo-lysosomal vesicle trafficking and lysosome biogenesis (PubMed:24554766, PubMed:27253064, PubMed:31194677). The CORVET complex facilitates docking and fusion of endosomal vesicles during endosome maturation, acts upstream of HOPS, but is not involved in autophagic flux (PubMed:27253064, PubMed:31194677). The CORVET complex may cooperate with the early endosomal tether Rbsn-5 to mediate endosomal fusion (PubMed:27253064). The HOPS complex facilitates docking and fusion of lysosomes with late endosomes and several other types of vesicles (PubMed:24554766, PubMed:31194677). The HOPS complex is also involved in autophagy and crinophagy (the elimination of unused secretory granules through their fusion with lysosomes) (PubMed:24554766, PubMed:31194677). The HOPS complex mediates autophagocitic flux, probably by binding autophagosome-associated Syx17/syntaxin 17, promoting assembly of the trans-SNARE complex and instigating autophagosome-lysosome fusion (PubMed:24554766). Independent of Syx17/syntaxin 17, HOPS is involved in biosynthetic transport to lysosomes and lysosome-related organelles such as eye-pigment granules (PubMed:24554766, PubMed:31194677). Required for endocytic degradation of boss/bride of sevenless and N/Notch in developing ommatidia (PubMed:24554766).</text>
</comment>
<comment type="subunit">
    <text evidence="2 3 4 5 6">Component of the homotypic fusion and vacuole protein sorting (HOPS) complex, composed of Vps16A, car/Vps33A, dor/Vps18, Vps39, Vps11 and lt/Vps41 (PubMed:31194677). Interacts with Syx17 (via SNARE domain); the interaction may involve multiple components of the HOPS complex and may promote assembly of the Syx17-Snap29-Vamp7 trans-SNARE complex (PubMed:24554766). Component of the class C core vacuole/endosome tethering (CORVET) complex composed of at least Vps8, dor/Vps18, car/Vps33A and Vps16A; unlike in other species, Vps11 is not part of the Drosophila complex (PubMed:27253064). Due to the reduced number of components the Drosophila CORVET complex is often referred to as the miniCORVET complex (PubMed:27253064). The tethering complex core made up of Vps16A, car/Vps33A and dor/Vps18 and shared by both HOPS and CORVET, preferentially associates with CORVET-specific Vps8 over HOPS-specific lt/Vps41 (PubMed:31194677). Interacts with Rab2 (GTP-bound form) (PubMed:28483915).</text>
</comment>
<comment type="subcellular location">
    <subcellularLocation>
        <location evidence="1">Late endosome membrane</location>
        <topology evidence="1">Peripheral membrane protein</topology>
        <orientation evidence="1">Cytoplasmic side</orientation>
    </subcellularLocation>
    <subcellularLocation>
        <location evidence="1 2">Lysosome membrane</location>
        <topology evidence="1">Peripheral membrane protein</topology>
        <orientation evidence="1">Cytoplasmic side</orientation>
    </subcellularLocation>
    <subcellularLocation>
        <location evidence="2">Cytoplasmic vesicle</location>
        <location evidence="2">Autophagosome</location>
    </subcellularLocation>
    <text evidence="1 2">Cytoplasmic, peripheral membrane protein associated with late endosomes/lysosomes (By similarity). Autophagosome localization is dependent on Syx17 (PubMed:24554766).</text>
</comment>
<comment type="disruption phenotype">
    <text evidence="2">Light orange eye color, probably due to impaired deposition of pigment granules (PubMed:24554766). Impaired autophagosome clearance in fat body cells of starved 3rd instar (L3) larvae (PubMed:24554766). Accumulation of Notch in photoreceptor cells and boss/bride of sevenless in R7 photoreceptor cells of developing larval ommatidia (PubMed:24554766).</text>
</comment>
<comment type="similarity">
    <text evidence="1">Belongs to the VPS16 family.</text>
</comment>
<keyword id="KW-0072">Autophagy</keyword>
<keyword id="KW-0968">Cytoplasmic vesicle</keyword>
<keyword id="KW-0967">Endosome</keyword>
<keyword id="KW-0458">Lysosome</keyword>
<keyword id="KW-0472">Membrane</keyword>
<keyword id="KW-0653">Protein transport</keyword>
<keyword id="KW-1185">Reference proteome</keyword>
<keyword id="KW-0813">Transport</keyword>
<reference evidence="11" key="1">
    <citation type="journal article" date="2000" name="Science">
        <title>The genome sequence of Drosophila melanogaster.</title>
        <authorList>
            <person name="Adams M.D."/>
            <person name="Celniker S.E."/>
            <person name="Holt R.A."/>
            <person name="Evans C.A."/>
            <person name="Gocayne J.D."/>
            <person name="Amanatides P.G."/>
            <person name="Scherer S.E."/>
            <person name="Li P.W."/>
            <person name="Hoskins R.A."/>
            <person name="Galle R.F."/>
            <person name="George R.A."/>
            <person name="Lewis S.E."/>
            <person name="Richards S."/>
            <person name="Ashburner M."/>
            <person name="Henderson S.N."/>
            <person name="Sutton G.G."/>
            <person name="Wortman J.R."/>
            <person name="Yandell M.D."/>
            <person name="Zhang Q."/>
            <person name="Chen L.X."/>
            <person name="Brandon R.C."/>
            <person name="Rogers Y.-H.C."/>
            <person name="Blazej R.G."/>
            <person name="Champe M."/>
            <person name="Pfeiffer B.D."/>
            <person name="Wan K.H."/>
            <person name="Doyle C."/>
            <person name="Baxter E.G."/>
            <person name="Helt G."/>
            <person name="Nelson C.R."/>
            <person name="Miklos G.L.G."/>
            <person name="Abril J.F."/>
            <person name="Agbayani A."/>
            <person name="An H.-J."/>
            <person name="Andrews-Pfannkoch C."/>
            <person name="Baldwin D."/>
            <person name="Ballew R.M."/>
            <person name="Basu A."/>
            <person name="Baxendale J."/>
            <person name="Bayraktaroglu L."/>
            <person name="Beasley E.M."/>
            <person name="Beeson K.Y."/>
            <person name="Benos P.V."/>
            <person name="Berman B.P."/>
            <person name="Bhandari D."/>
            <person name="Bolshakov S."/>
            <person name="Borkova D."/>
            <person name="Botchan M.R."/>
            <person name="Bouck J."/>
            <person name="Brokstein P."/>
            <person name="Brottier P."/>
            <person name="Burtis K.C."/>
            <person name="Busam D.A."/>
            <person name="Butler H."/>
            <person name="Cadieu E."/>
            <person name="Center A."/>
            <person name="Chandra I."/>
            <person name="Cherry J.M."/>
            <person name="Cawley S."/>
            <person name="Dahlke C."/>
            <person name="Davenport L.B."/>
            <person name="Davies P."/>
            <person name="de Pablos B."/>
            <person name="Delcher A."/>
            <person name="Deng Z."/>
            <person name="Mays A.D."/>
            <person name="Dew I."/>
            <person name="Dietz S.M."/>
            <person name="Dodson K."/>
            <person name="Doup L.E."/>
            <person name="Downes M."/>
            <person name="Dugan-Rocha S."/>
            <person name="Dunkov B.C."/>
            <person name="Dunn P."/>
            <person name="Durbin K.J."/>
            <person name="Evangelista C.C."/>
            <person name="Ferraz C."/>
            <person name="Ferriera S."/>
            <person name="Fleischmann W."/>
            <person name="Fosler C."/>
            <person name="Gabrielian A.E."/>
            <person name="Garg N.S."/>
            <person name="Gelbart W.M."/>
            <person name="Glasser K."/>
            <person name="Glodek A."/>
            <person name="Gong F."/>
            <person name="Gorrell J.H."/>
            <person name="Gu Z."/>
            <person name="Guan P."/>
            <person name="Harris M."/>
            <person name="Harris N.L."/>
            <person name="Harvey D.A."/>
            <person name="Heiman T.J."/>
            <person name="Hernandez J.R."/>
            <person name="Houck J."/>
            <person name="Hostin D."/>
            <person name="Houston K.A."/>
            <person name="Howland T.J."/>
            <person name="Wei M.-H."/>
            <person name="Ibegwam C."/>
            <person name="Jalali M."/>
            <person name="Kalush F."/>
            <person name="Karpen G.H."/>
            <person name="Ke Z."/>
            <person name="Kennison J.A."/>
            <person name="Ketchum K.A."/>
            <person name="Kimmel B.E."/>
            <person name="Kodira C.D."/>
            <person name="Kraft C.L."/>
            <person name="Kravitz S."/>
            <person name="Kulp D."/>
            <person name="Lai Z."/>
            <person name="Lasko P."/>
            <person name="Lei Y."/>
            <person name="Levitsky A.A."/>
            <person name="Li J.H."/>
            <person name="Li Z."/>
            <person name="Liang Y."/>
            <person name="Lin X."/>
            <person name="Liu X."/>
            <person name="Mattei B."/>
            <person name="McIntosh T.C."/>
            <person name="McLeod M.P."/>
            <person name="McPherson D."/>
            <person name="Merkulov G."/>
            <person name="Milshina N.V."/>
            <person name="Mobarry C."/>
            <person name="Morris J."/>
            <person name="Moshrefi A."/>
            <person name="Mount S.M."/>
            <person name="Moy M."/>
            <person name="Murphy B."/>
            <person name="Murphy L."/>
            <person name="Muzny D.M."/>
            <person name="Nelson D.L."/>
            <person name="Nelson D.R."/>
            <person name="Nelson K.A."/>
            <person name="Nixon K."/>
            <person name="Nusskern D.R."/>
            <person name="Pacleb J.M."/>
            <person name="Palazzolo M."/>
            <person name="Pittman G.S."/>
            <person name="Pan S."/>
            <person name="Pollard J."/>
            <person name="Puri V."/>
            <person name="Reese M.G."/>
            <person name="Reinert K."/>
            <person name="Remington K."/>
            <person name="Saunders R.D.C."/>
            <person name="Scheeler F."/>
            <person name="Shen H."/>
            <person name="Shue B.C."/>
            <person name="Siden-Kiamos I."/>
            <person name="Simpson M."/>
            <person name="Skupski M.P."/>
            <person name="Smith T.J."/>
            <person name="Spier E."/>
            <person name="Spradling A.C."/>
            <person name="Stapleton M."/>
            <person name="Strong R."/>
            <person name="Sun E."/>
            <person name="Svirskas R."/>
            <person name="Tector C."/>
            <person name="Turner R."/>
            <person name="Venter E."/>
            <person name="Wang A.H."/>
            <person name="Wang X."/>
            <person name="Wang Z.-Y."/>
            <person name="Wassarman D.A."/>
            <person name="Weinstock G.M."/>
            <person name="Weissenbach J."/>
            <person name="Williams S.M."/>
            <person name="Woodage T."/>
            <person name="Worley K.C."/>
            <person name="Wu D."/>
            <person name="Yang S."/>
            <person name="Yao Q.A."/>
            <person name="Ye J."/>
            <person name="Yeh R.-F."/>
            <person name="Zaveri J.S."/>
            <person name="Zhan M."/>
            <person name="Zhang G."/>
            <person name="Zhao Q."/>
            <person name="Zheng L."/>
            <person name="Zheng X.H."/>
            <person name="Zhong F.N."/>
            <person name="Zhong W."/>
            <person name="Zhou X."/>
            <person name="Zhu S.C."/>
            <person name="Zhu X."/>
            <person name="Smith H.O."/>
            <person name="Gibbs R.A."/>
            <person name="Myers E.W."/>
            <person name="Rubin G.M."/>
            <person name="Venter J.C."/>
        </authorList>
    </citation>
    <scope>NUCLEOTIDE SEQUENCE [LARGE SCALE GENOMIC DNA]</scope>
    <source>
        <strain evidence="11">Berkeley</strain>
    </source>
</reference>
<reference evidence="11" key="2">
    <citation type="journal article" date="2002" name="Genome Biol.">
        <title>Annotation of the Drosophila melanogaster euchromatic genome: a systematic review.</title>
        <authorList>
            <person name="Misra S."/>
            <person name="Crosby M.A."/>
            <person name="Mungall C.J."/>
            <person name="Matthews B.B."/>
            <person name="Campbell K.S."/>
            <person name="Hradecky P."/>
            <person name="Huang Y."/>
            <person name="Kaminker J.S."/>
            <person name="Millburn G.H."/>
            <person name="Prochnik S.E."/>
            <person name="Smith C.D."/>
            <person name="Tupy J.L."/>
            <person name="Whitfield E.J."/>
            <person name="Bayraktaroglu L."/>
            <person name="Berman B.P."/>
            <person name="Bettencourt B.R."/>
            <person name="Celniker S.E."/>
            <person name="de Grey A.D.N.J."/>
            <person name="Drysdale R.A."/>
            <person name="Harris N.L."/>
            <person name="Richter J."/>
            <person name="Russo S."/>
            <person name="Schroeder A.J."/>
            <person name="Shu S.Q."/>
            <person name="Stapleton M."/>
            <person name="Yamada C."/>
            <person name="Ashburner M."/>
            <person name="Gelbart W.M."/>
            <person name="Rubin G.M."/>
            <person name="Lewis S.E."/>
        </authorList>
    </citation>
    <scope>GENOME REANNOTATION</scope>
    <source>
        <strain evidence="11">Berkeley</strain>
    </source>
</reference>
<reference evidence="9" key="3">
    <citation type="journal article" date="2002" name="Genome Biol.">
        <title>A Drosophila full-length cDNA resource.</title>
        <authorList>
            <person name="Stapleton M."/>
            <person name="Carlson J.W."/>
            <person name="Brokstein P."/>
            <person name="Yu C."/>
            <person name="Champe M."/>
            <person name="George R.A."/>
            <person name="Guarin H."/>
            <person name="Kronmiller B."/>
            <person name="Pacleb J.M."/>
            <person name="Park S."/>
            <person name="Wan K.H."/>
            <person name="Rubin G.M."/>
            <person name="Celniker S.E."/>
        </authorList>
    </citation>
    <scope>NUCLEOTIDE SEQUENCE [LARGE SCALE MRNA]</scope>
    <source>
        <strain evidence="9">Berkeley</strain>
        <tissue evidence="9">Embryo</tissue>
    </source>
</reference>
<reference evidence="7" key="4">
    <citation type="journal article" date="2014" name="Mol. Biol. Cell">
        <title>Interaction of the HOPS complex with Syntaxin 17 mediates autophagosome clearance in Drosophila.</title>
        <authorList>
            <person name="Takats S."/>
            <person name="Pircs K."/>
            <person name="Nagy P."/>
            <person name="Varga A."/>
            <person name="Karpati M."/>
            <person name="Hegedus K."/>
            <person name="Kramer H."/>
            <person name="Kovacs A.L."/>
            <person name="Sass M."/>
            <person name="Juhasz G."/>
        </authorList>
    </citation>
    <scope>FUNCTION</scope>
    <scope>INTERACTION WITH SYX17</scope>
    <scope>DISRUPTION PHENOTYPE</scope>
    <scope>SUBCELLULAR LOCATION</scope>
</reference>
<reference evidence="7" key="5">
    <citation type="journal article" date="2016" name="Elife">
        <title>MiniCORVET is a Vps8-containing early endosomal tether in Drosophila.</title>
        <authorList>
            <person name="Lorincz P."/>
            <person name="Lakatos Z."/>
            <person name="Varga A."/>
            <person name="Maruzs T."/>
            <person name="Simon-Vecsei Z."/>
            <person name="Darula Z."/>
            <person name="Benko P."/>
            <person name="Csordas G."/>
            <person name="Lippai M."/>
            <person name="Ando I."/>
            <person name="Hegedus K."/>
            <person name="Medzihradszky K.F."/>
            <person name="Takats S."/>
            <person name="Juhasz G."/>
        </authorList>
    </citation>
    <scope>FUNCTION</scope>
    <scope>IDENTIFICATION IN THE CORVET COMPLEX</scope>
    <scope>IDENTIFICATION BY MASS SPECTROMETRY</scope>
</reference>
<reference evidence="7" key="6">
    <citation type="journal article" date="2017" name="J. Cell Biol.">
        <title>Rab2 promotes autophagic and endocytic lysosomal degradation.</title>
        <authorList>
            <person name="Lorincz P."/>
            <person name="Toth S."/>
            <person name="Benko P."/>
            <person name="Lakatos Z."/>
            <person name="Boda A."/>
            <person name="Glatz G."/>
            <person name="Zobel M."/>
            <person name="Bisi S."/>
            <person name="Hegedus K."/>
            <person name="Takats S."/>
            <person name="Scita G."/>
            <person name="Juhasz G."/>
        </authorList>
    </citation>
    <scope>INTERACTION WITH RAB2</scope>
</reference>
<reference evidence="7" key="7">
    <citation type="journal article" date="2019" name="Elife">
        <title>Vps8 overexpression inhibits HOPS-dependent trafficking routes by outcompeting Vps41/Lt.</title>
        <authorList>
            <person name="Lorincz P."/>
            <person name="Kenez L.A."/>
            <person name="Toth S."/>
            <person name="Kiss V."/>
            <person name="Varga A."/>
            <person name="Csizmadia T."/>
            <person name="Simon-Vecsei Z."/>
            <person name="Juhasz G."/>
        </authorList>
    </citation>
    <scope>FUNCTION</scope>
    <scope>IDENTIFICATION IN THE HOPS COMPLEX</scope>
</reference>
<organism evidence="11">
    <name type="scientific">Drosophila melanogaster</name>
    <name type="common">Fruit fly</name>
    <dbReference type="NCBI Taxonomy" id="7227"/>
    <lineage>
        <taxon>Eukaryota</taxon>
        <taxon>Metazoa</taxon>
        <taxon>Ecdysozoa</taxon>
        <taxon>Arthropoda</taxon>
        <taxon>Hexapoda</taxon>
        <taxon>Insecta</taxon>
        <taxon>Pterygota</taxon>
        <taxon>Neoptera</taxon>
        <taxon>Endopterygota</taxon>
        <taxon>Diptera</taxon>
        <taxon>Brachycera</taxon>
        <taxon>Muscomorpha</taxon>
        <taxon>Ephydroidea</taxon>
        <taxon>Drosophilidae</taxon>
        <taxon>Drosophila</taxon>
        <taxon>Sophophora</taxon>
    </lineage>
</organism>